<comment type="function">
    <text evidence="1">Catalyzes the hydrolysis of N(2)-succinylarginine into N(2)-succinylornithine, ammonia and CO(2).</text>
</comment>
<comment type="catalytic activity">
    <reaction evidence="1">
        <text>N(2)-succinyl-L-arginine + 2 H2O + 2 H(+) = N(2)-succinyl-L-ornithine + 2 NH4(+) + CO2</text>
        <dbReference type="Rhea" id="RHEA:19533"/>
        <dbReference type="ChEBI" id="CHEBI:15377"/>
        <dbReference type="ChEBI" id="CHEBI:15378"/>
        <dbReference type="ChEBI" id="CHEBI:16526"/>
        <dbReference type="ChEBI" id="CHEBI:28938"/>
        <dbReference type="ChEBI" id="CHEBI:58241"/>
        <dbReference type="ChEBI" id="CHEBI:58514"/>
        <dbReference type="EC" id="3.5.3.23"/>
    </reaction>
</comment>
<comment type="pathway">
    <text evidence="1">Amino-acid degradation; L-arginine degradation via AST pathway; L-glutamate and succinate from L-arginine: step 2/5.</text>
</comment>
<comment type="subunit">
    <text evidence="1">Homodimer.</text>
</comment>
<comment type="similarity">
    <text evidence="1">Belongs to the succinylarginine dihydrolase family.</text>
</comment>
<sequence>MNAQEANFDGLVGPTHNYAGLSFGNVASLNNEKSAANPKAAAKQGLRKMKQLADLGFAQGVLPPQERPSLRLLRELGFSGKDADVIAKAAKQAPELLAAASSASAMWTANAATVSPSADTSDGRVHFTPANLCSKLHRAIEHEATRRTLSTLFADPAHFAVHEALTGTPALGDEGAANHTRFCAEYGKPGIEFFVYGRAEYRRGPEPKRFPARQTFEASRAVAHRHGLAEEATVYAQQDPDVIDAGVFHNDVISVGNRDTLFTHERAFVNKQAIYDTLTAALDARGARLNVIEVPDAAVSVNDAVTSYLFNSQLLSRADGSQVLVVPQECRENANVAAYLDQLAAGNGPIHDVLVFDLRESMKNGGGPACLRLRVVLNEAERAAVTSNVWINDTLFASLDAWIDKHYRDRLAPEDLADPALLDESRTALDELTQILRVGSLYDFQR</sequence>
<evidence type="ECO:0000255" key="1">
    <source>
        <dbReference type="HAMAP-Rule" id="MF_01172"/>
    </source>
</evidence>
<dbReference type="EC" id="3.5.3.23" evidence="1"/>
<dbReference type="EMBL" id="AM747720">
    <property type="protein sequence ID" value="CAR51366.1"/>
    <property type="molecule type" value="Genomic_DNA"/>
</dbReference>
<dbReference type="RefSeq" id="WP_006488742.1">
    <property type="nucleotide sequence ID" value="NC_011000.1"/>
</dbReference>
<dbReference type="SMR" id="B4ECZ9"/>
<dbReference type="GeneID" id="56557635"/>
<dbReference type="KEGG" id="bcj:BCAL1063"/>
<dbReference type="eggNOG" id="COG3724">
    <property type="taxonomic scope" value="Bacteria"/>
</dbReference>
<dbReference type="HOGENOM" id="CLU_053835_0_0_4"/>
<dbReference type="BioCyc" id="BCEN216591:G1G1V-1173-MONOMER"/>
<dbReference type="UniPathway" id="UPA00185">
    <property type="reaction ID" value="UER00280"/>
</dbReference>
<dbReference type="Proteomes" id="UP000001035">
    <property type="component" value="Chromosome 1"/>
</dbReference>
<dbReference type="GO" id="GO:0009015">
    <property type="term" value="F:N-succinylarginine dihydrolase activity"/>
    <property type="evidence" value="ECO:0007669"/>
    <property type="project" value="UniProtKB-UniRule"/>
</dbReference>
<dbReference type="GO" id="GO:0019544">
    <property type="term" value="P:arginine catabolic process to glutamate"/>
    <property type="evidence" value="ECO:0007669"/>
    <property type="project" value="UniProtKB-UniRule"/>
</dbReference>
<dbReference type="GO" id="GO:0019545">
    <property type="term" value="P:arginine catabolic process to succinate"/>
    <property type="evidence" value="ECO:0007669"/>
    <property type="project" value="UniProtKB-UniRule"/>
</dbReference>
<dbReference type="Gene3D" id="3.75.10.20">
    <property type="entry name" value="Succinylarginine dihydrolase"/>
    <property type="match status" value="1"/>
</dbReference>
<dbReference type="HAMAP" id="MF_01172">
    <property type="entry name" value="AstB"/>
    <property type="match status" value="1"/>
</dbReference>
<dbReference type="InterPro" id="IPR037031">
    <property type="entry name" value="AstB_sf"/>
</dbReference>
<dbReference type="InterPro" id="IPR007079">
    <property type="entry name" value="SuccinylArg_d-Hdrlase_AstB"/>
</dbReference>
<dbReference type="NCBIfam" id="TIGR03241">
    <property type="entry name" value="arg_catab_astB"/>
    <property type="match status" value="1"/>
</dbReference>
<dbReference type="NCBIfam" id="NF009789">
    <property type="entry name" value="PRK13281.1"/>
    <property type="match status" value="1"/>
</dbReference>
<dbReference type="PANTHER" id="PTHR30420">
    <property type="entry name" value="N-SUCCINYLARGININE DIHYDROLASE"/>
    <property type="match status" value="1"/>
</dbReference>
<dbReference type="PANTHER" id="PTHR30420:SF2">
    <property type="entry name" value="N-SUCCINYLARGININE DIHYDROLASE"/>
    <property type="match status" value="1"/>
</dbReference>
<dbReference type="Pfam" id="PF04996">
    <property type="entry name" value="AstB"/>
    <property type="match status" value="1"/>
</dbReference>
<dbReference type="SUPFAM" id="SSF55909">
    <property type="entry name" value="Pentein"/>
    <property type="match status" value="1"/>
</dbReference>
<name>ASTB_BURCJ</name>
<reference key="1">
    <citation type="journal article" date="2009" name="J. Bacteriol.">
        <title>The genome of Burkholderia cenocepacia J2315, an epidemic pathogen of cystic fibrosis patients.</title>
        <authorList>
            <person name="Holden M.T."/>
            <person name="Seth-Smith H.M."/>
            <person name="Crossman L.C."/>
            <person name="Sebaihia M."/>
            <person name="Bentley S.D."/>
            <person name="Cerdeno-Tarraga A.M."/>
            <person name="Thomson N.R."/>
            <person name="Bason N."/>
            <person name="Quail M.A."/>
            <person name="Sharp S."/>
            <person name="Cherevach I."/>
            <person name="Churcher C."/>
            <person name="Goodhead I."/>
            <person name="Hauser H."/>
            <person name="Holroyd N."/>
            <person name="Mungall K."/>
            <person name="Scott P."/>
            <person name="Walker D."/>
            <person name="White B."/>
            <person name="Rose H."/>
            <person name="Iversen P."/>
            <person name="Mil-Homens D."/>
            <person name="Rocha E.P."/>
            <person name="Fialho A.M."/>
            <person name="Baldwin A."/>
            <person name="Dowson C."/>
            <person name="Barrell B.G."/>
            <person name="Govan J.R."/>
            <person name="Vandamme P."/>
            <person name="Hart C.A."/>
            <person name="Mahenthiralingam E."/>
            <person name="Parkhill J."/>
        </authorList>
    </citation>
    <scope>NUCLEOTIDE SEQUENCE [LARGE SCALE GENOMIC DNA]</scope>
    <source>
        <strain>ATCC BAA-245 / DSM 16553 / LMG 16656 / NCTC 13227 / J2315 / CF5610</strain>
    </source>
</reference>
<keyword id="KW-0056">Arginine metabolism</keyword>
<keyword id="KW-0378">Hydrolase</keyword>
<protein>
    <recommendedName>
        <fullName evidence="1">N-succinylarginine dihydrolase</fullName>
        <ecNumber evidence="1">3.5.3.23</ecNumber>
    </recommendedName>
</protein>
<accession>B4ECZ9</accession>
<proteinExistence type="inferred from homology"/>
<feature type="chain" id="PRO_1000138005" description="N-succinylarginine dihydrolase">
    <location>
        <begin position="1"/>
        <end position="446"/>
    </location>
</feature>
<feature type="active site" evidence="1">
    <location>
        <position position="174"/>
    </location>
</feature>
<feature type="active site" evidence="1">
    <location>
        <position position="249"/>
    </location>
</feature>
<feature type="active site" description="Nucleophile" evidence="1">
    <location>
        <position position="370"/>
    </location>
</feature>
<feature type="binding site" evidence="1">
    <location>
        <begin position="19"/>
        <end position="28"/>
    </location>
    <ligand>
        <name>substrate</name>
    </ligand>
</feature>
<feature type="binding site" evidence="1">
    <location>
        <position position="110"/>
    </location>
    <ligand>
        <name>substrate</name>
    </ligand>
</feature>
<feature type="binding site" evidence="1">
    <location>
        <begin position="137"/>
        <end position="138"/>
    </location>
    <ligand>
        <name>substrate</name>
    </ligand>
</feature>
<feature type="binding site" evidence="1">
    <location>
        <position position="213"/>
    </location>
    <ligand>
        <name>substrate</name>
    </ligand>
</feature>
<feature type="binding site" evidence="1">
    <location>
        <position position="251"/>
    </location>
    <ligand>
        <name>substrate</name>
    </ligand>
</feature>
<feature type="binding site" evidence="1">
    <location>
        <position position="364"/>
    </location>
    <ligand>
        <name>substrate</name>
    </ligand>
</feature>
<gene>
    <name evidence="1" type="primary">astB</name>
    <name type="ordered locus">BceJ2315_10470</name>
    <name type="ORF">BCAL1063</name>
</gene>
<organism>
    <name type="scientific">Burkholderia cenocepacia (strain ATCC BAA-245 / DSM 16553 / LMG 16656 / NCTC 13227 / J2315 / CF5610)</name>
    <name type="common">Burkholderia cepacia (strain J2315)</name>
    <dbReference type="NCBI Taxonomy" id="216591"/>
    <lineage>
        <taxon>Bacteria</taxon>
        <taxon>Pseudomonadati</taxon>
        <taxon>Pseudomonadota</taxon>
        <taxon>Betaproteobacteria</taxon>
        <taxon>Burkholderiales</taxon>
        <taxon>Burkholderiaceae</taxon>
        <taxon>Burkholderia</taxon>
        <taxon>Burkholderia cepacia complex</taxon>
    </lineage>
</organism>